<accession>Q3ID16</accession>
<protein>
    <recommendedName>
        <fullName evidence="1">Dual-specificity RNA methyltransferase RlmN</fullName>
        <ecNumber evidence="1">2.1.1.192</ecNumber>
    </recommendedName>
    <alternativeName>
        <fullName evidence="1">23S rRNA (adenine(2503)-C(2))-methyltransferase</fullName>
    </alternativeName>
    <alternativeName>
        <fullName evidence="1">23S rRNA m2A2503 methyltransferase</fullName>
    </alternativeName>
    <alternativeName>
        <fullName evidence="1">Ribosomal RNA large subunit methyltransferase N</fullName>
    </alternativeName>
    <alternativeName>
        <fullName evidence="1">tRNA (adenine(37)-C(2))-methyltransferase</fullName>
    </alternativeName>
    <alternativeName>
        <fullName evidence="1">tRNA m2A37 methyltransferase</fullName>
    </alternativeName>
</protein>
<organism>
    <name type="scientific">Pseudoalteromonas translucida (strain TAC 125)</name>
    <dbReference type="NCBI Taxonomy" id="326442"/>
    <lineage>
        <taxon>Bacteria</taxon>
        <taxon>Pseudomonadati</taxon>
        <taxon>Pseudomonadota</taxon>
        <taxon>Gammaproteobacteria</taxon>
        <taxon>Alteromonadales</taxon>
        <taxon>Pseudoalteromonadaceae</taxon>
        <taxon>Pseudoalteromonas</taxon>
    </lineage>
</organism>
<comment type="function">
    <text evidence="1">Specifically methylates position 2 of adenine 2503 in 23S rRNA and position 2 of adenine 37 in tRNAs. m2A2503 modification seems to play a crucial role in the proofreading step occurring at the peptidyl transferase center and thus would serve to optimize ribosomal fidelity.</text>
</comment>
<comment type="catalytic activity">
    <reaction evidence="1">
        <text>adenosine(2503) in 23S rRNA + 2 reduced [2Fe-2S]-[ferredoxin] + 2 S-adenosyl-L-methionine = 2-methyladenosine(2503) in 23S rRNA + 5'-deoxyadenosine + L-methionine + 2 oxidized [2Fe-2S]-[ferredoxin] + S-adenosyl-L-homocysteine</text>
        <dbReference type="Rhea" id="RHEA:42916"/>
        <dbReference type="Rhea" id="RHEA-COMP:10000"/>
        <dbReference type="Rhea" id="RHEA-COMP:10001"/>
        <dbReference type="Rhea" id="RHEA-COMP:10152"/>
        <dbReference type="Rhea" id="RHEA-COMP:10282"/>
        <dbReference type="ChEBI" id="CHEBI:17319"/>
        <dbReference type="ChEBI" id="CHEBI:33737"/>
        <dbReference type="ChEBI" id="CHEBI:33738"/>
        <dbReference type="ChEBI" id="CHEBI:57844"/>
        <dbReference type="ChEBI" id="CHEBI:57856"/>
        <dbReference type="ChEBI" id="CHEBI:59789"/>
        <dbReference type="ChEBI" id="CHEBI:74411"/>
        <dbReference type="ChEBI" id="CHEBI:74497"/>
        <dbReference type="EC" id="2.1.1.192"/>
    </reaction>
</comment>
<comment type="catalytic activity">
    <reaction evidence="1">
        <text>adenosine(37) in tRNA + 2 reduced [2Fe-2S]-[ferredoxin] + 2 S-adenosyl-L-methionine = 2-methyladenosine(37) in tRNA + 5'-deoxyadenosine + L-methionine + 2 oxidized [2Fe-2S]-[ferredoxin] + S-adenosyl-L-homocysteine</text>
        <dbReference type="Rhea" id="RHEA:43332"/>
        <dbReference type="Rhea" id="RHEA-COMP:10000"/>
        <dbReference type="Rhea" id="RHEA-COMP:10001"/>
        <dbReference type="Rhea" id="RHEA-COMP:10162"/>
        <dbReference type="Rhea" id="RHEA-COMP:10485"/>
        <dbReference type="ChEBI" id="CHEBI:17319"/>
        <dbReference type="ChEBI" id="CHEBI:33737"/>
        <dbReference type="ChEBI" id="CHEBI:33738"/>
        <dbReference type="ChEBI" id="CHEBI:57844"/>
        <dbReference type="ChEBI" id="CHEBI:57856"/>
        <dbReference type="ChEBI" id="CHEBI:59789"/>
        <dbReference type="ChEBI" id="CHEBI:74411"/>
        <dbReference type="ChEBI" id="CHEBI:74497"/>
        <dbReference type="EC" id="2.1.1.192"/>
    </reaction>
</comment>
<comment type="cofactor">
    <cofactor evidence="1">
        <name>[4Fe-4S] cluster</name>
        <dbReference type="ChEBI" id="CHEBI:49883"/>
    </cofactor>
    <text evidence="1">Binds 1 [4Fe-4S] cluster. The cluster is coordinated with 3 cysteines and an exchangeable S-adenosyl-L-methionine.</text>
</comment>
<comment type="subcellular location">
    <subcellularLocation>
        <location evidence="1">Cytoplasm</location>
    </subcellularLocation>
</comment>
<comment type="miscellaneous">
    <text evidence="1">Reaction proceeds by a ping-pong mechanism involving intermediate methylation of a conserved cysteine residue.</text>
</comment>
<comment type="similarity">
    <text evidence="1">Belongs to the radical SAM superfamily. RlmN family.</text>
</comment>
<proteinExistence type="inferred from homology"/>
<dbReference type="EC" id="2.1.1.192" evidence="1"/>
<dbReference type="EMBL" id="CR954247">
    <property type="protein sequence ID" value="CAI89188.1"/>
    <property type="molecule type" value="Genomic_DNA"/>
</dbReference>
<dbReference type="SMR" id="Q3ID16"/>
<dbReference type="STRING" id="326442.PSHAb0141"/>
<dbReference type="KEGG" id="pha:PSHAb0141"/>
<dbReference type="PATRIC" id="fig|326442.8.peg.3054"/>
<dbReference type="eggNOG" id="COG0820">
    <property type="taxonomic scope" value="Bacteria"/>
</dbReference>
<dbReference type="HOGENOM" id="CLU_029101_0_0_6"/>
<dbReference type="BioCyc" id="PHAL326442:PSHA_RS15545-MONOMER"/>
<dbReference type="Proteomes" id="UP000006843">
    <property type="component" value="Chromosome II"/>
</dbReference>
<dbReference type="GO" id="GO:0005737">
    <property type="term" value="C:cytoplasm"/>
    <property type="evidence" value="ECO:0007669"/>
    <property type="project" value="UniProtKB-SubCell"/>
</dbReference>
<dbReference type="GO" id="GO:0051539">
    <property type="term" value="F:4 iron, 4 sulfur cluster binding"/>
    <property type="evidence" value="ECO:0007669"/>
    <property type="project" value="UniProtKB-UniRule"/>
</dbReference>
<dbReference type="GO" id="GO:0046872">
    <property type="term" value="F:metal ion binding"/>
    <property type="evidence" value="ECO:0007669"/>
    <property type="project" value="UniProtKB-KW"/>
</dbReference>
<dbReference type="GO" id="GO:0070040">
    <property type="term" value="F:rRNA (adenine(2503)-C2-)-methyltransferase activity"/>
    <property type="evidence" value="ECO:0007669"/>
    <property type="project" value="UniProtKB-UniRule"/>
</dbReference>
<dbReference type="GO" id="GO:0019843">
    <property type="term" value="F:rRNA binding"/>
    <property type="evidence" value="ECO:0007669"/>
    <property type="project" value="UniProtKB-UniRule"/>
</dbReference>
<dbReference type="GO" id="GO:0002935">
    <property type="term" value="F:tRNA (adenine(37)-C2)-methyltransferase activity"/>
    <property type="evidence" value="ECO:0007669"/>
    <property type="project" value="UniProtKB-UniRule"/>
</dbReference>
<dbReference type="GO" id="GO:0000049">
    <property type="term" value="F:tRNA binding"/>
    <property type="evidence" value="ECO:0007669"/>
    <property type="project" value="UniProtKB-UniRule"/>
</dbReference>
<dbReference type="GO" id="GO:0070475">
    <property type="term" value="P:rRNA base methylation"/>
    <property type="evidence" value="ECO:0007669"/>
    <property type="project" value="UniProtKB-UniRule"/>
</dbReference>
<dbReference type="GO" id="GO:0030488">
    <property type="term" value="P:tRNA methylation"/>
    <property type="evidence" value="ECO:0007669"/>
    <property type="project" value="UniProtKB-UniRule"/>
</dbReference>
<dbReference type="CDD" id="cd01335">
    <property type="entry name" value="Radical_SAM"/>
    <property type="match status" value="1"/>
</dbReference>
<dbReference type="FunFam" id="1.10.150.530:FF:000003">
    <property type="entry name" value="Dual-specificity RNA methyltransferase RlmN"/>
    <property type="match status" value="1"/>
</dbReference>
<dbReference type="FunFam" id="3.20.20.70:FF:000008">
    <property type="entry name" value="Dual-specificity RNA methyltransferase RlmN"/>
    <property type="match status" value="1"/>
</dbReference>
<dbReference type="Gene3D" id="1.10.150.530">
    <property type="match status" value="1"/>
</dbReference>
<dbReference type="Gene3D" id="3.20.20.70">
    <property type="entry name" value="Aldolase class I"/>
    <property type="match status" value="1"/>
</dbReference>
<dbReference type="HAMAP" id="MF_01849">
    <property type="entry name" value="RNA_methyltr_RlmN"/>
    <property type="match status" value="1"/>
</dbReference>
<dbReference type="InterPro" id="IPR013785">
    <property type="entry name" value="Aldolase_TIM"/>
</dbReference>
<dbReference type="InterPro" id="IPR040072">
    <property type="entry name" value="Methyltransferase_A"/>
</dbReference>
<dbReference type="InterPro" id="IPR048641">
    <property type="entry name" value="RlmN_N"/>
</dbReference>
<dbReference type="InterPro" id="IPR027492">
    <property type="entry name" value="RNA_MTrfase_RlmN"/>
</dbReference>
<dbReference type="InterPro" id="IPR004383">
    <property type="entry name" value="rRNA_lsu_MTrfase_RlmN/Cfr"/>
</dbReference>
<dbReference type="InterPro" id="IPR007197">
    <property type="entry name" value="rSAM"/>
</dbReference>
<dbReference type="NCBIfam" id="NF008396">
    <property type="entry name" value="PRK11194.1"/>
    <property type="match status" value="1"/>
</dbReference>
<dbReference type="NCBIfam" id="TIGR00048">
    <property type="entry name" value="rRNA_mod_RlmN"/>
    <property type="match status" value="1"/>
</dbReference>
<dbReference type="PANTHER" id="PTHR30544">
    <property type="entry name" value="23S RRNA METHYLTRANSFERASE"/>
    <property type="match status" value="1"/>
</dbReference>
<dbReference type="PANTHER" id="PTHR30544:SF5">
    <property type="entry name" value="RADICAL SAM CORE DOMAIN-CONTAINING PROTEIN"/>
    <property type="match status" value="1"/>
</dbReference>
<dbReference type="Pfam" id="PF04055">
    <property type="entry name" value="Radical_SAM"/>
    <property type="match status" value="1"/>
</dbReference>
<dbReference type="Pfam" id="PF21016">
    <property type="entry name" value="RlmN_N"/>
    <property type="match status" value="1"/>
</dbReference>
<dbReference type="PIRSF" id="PIRSF006004">
    <property type="entry name" value="CHP00048"/>
    <property type="match status" value="1"/>
</dbReference>
<dbReference type="SFLD" id="SFLDF00275">
    <property type="entry name" value="adenosine_C2_methyltransferase"/>
    <property type="match status" value="1"/>
</dbReference>
<dbReference type="SFLD" id="SFLDG01062">
    <property type="entry name" value="methyltransferase_(Class_A)"/>
    <property type="match status" value="1"/>
</dbReference>
<dbReference type="SUPFAM" id="SSF102114">
    <property type="entry name" value="Radical SAM enzymes"/>
    <property type="match status" value="1"/>
</dbReference>
<dbReference type="PROSITE" id="PS51918">
    <property type="entry name" value="RADICAL_SAM"/>
    <property type="match status" value="1"/>
</dbReference>
<keyword id="KW-0004">4Fe-4S</keyword>
<keyword id="KW-0963">Cytoplasm</keyword>
<keyword id="KW-1015">Disulfide bond</keyword>
<keyword id="KW-0408">Iron</keyword>
<keyword id="KW-0411">Iron-sulfur</keyword>
<keyword id="KW-0479">Metal-binding</keyword>
<keyword id="KW-0489">Methyltransferase</keyword>
<keyword id="KW-1185">Reference proteome</keyword>
<keyword id="KW-0698">rRNA processing</keyword>
<keyword id="KW-0949">S-adenosyl-L-methionine</keyword>
<keyword id="KW-0808">Transferase</keyword>
<keyword id="KW-0819">tRNA processing</keyword>
<sequence length="376" mass="41821">MTEQKKINLLDLNREGMRELFASFGEKPFRSDQVMKWIYHFGVDNFDDMSNVNKKLKEKLKAECEIVAPEISVRQQAKDGTIKYALVLEGGQEVEAVWIPEKERATLCVSSQVGCALECTFCSTAQQGFNRNLKVSEIIGQVWRVAKDIGLDGHSEKRPVTNVVMMGMGEPLLNVKNVVPAMELMLDDWGFGLSKRRVTLSTSGVVPALDLLKEKIDVALAISLHAPDNALRDILVPVNKKYPIEEFLAACRRYIDGSKANKDVTVEYVMLNGINDSTDQAHALVQTLKGTPCKVNLIPFNPFPGNEYTRSSNSRIDRFSKVLQAAGITCIVRRPRGDDIDAACGQLAGDVVDRTKRLAKKKMRDDNAIAVNIHQA</sequence>
<feature type="chain" id="PRO_0000350329" description="Dual-specificity RNA methyltransferase RlmN">
    <location>
        <begin position="1"/>
        <end position="376"/>
    </location>
</feature>
<feature type="domain" description="Radical SAM core" evidence="2">
    <location>
        <begin position="101"/>
        <end position="339"/>
    </location>
</feature>
<feature type="active site" description="Proton acceptor" evidence="1">
    <location>
        <position position="95"/>
    </location>
</feature>
<feature type="active site" description="S-methylcysteine intermediate" evidence="1">
    <location>
        <position position="344"/>
    </location>
</feature>
<feature type="binding site" evidence="1">
    <location>
        <position position="115"/>
    </location>
    <ligand>
        <name>[4Fe-4S] cluster</name>
        <dbReference type="ChEBI" id="CHEBI:49883"/>
        <note>4Fe-4S-S-AdoMet</note>
    </ligand>
</feature>
<feature type="binding site" evidence="1">
    <location>
        <position position="119"/>
    </location>
    <ligand>
        <name>[4Fe-4S] cluster</name>
        <dbReference type="ChEBI" id="CHEBI:49883"/>
        <note>4Fe-4S-S-AdoMet</note>
    </ligand>
</feature>
<feature type="binding site" evidence="1">
    <location>
        <position position="122"/>
    </location>
    <ligand>
        <name>[4Fe-4S] cluster</name>
        <dbReference type="ChEBI" id="CHEBI:49883"/>
        <note>4Fe-4S-S-AdoMet</note>
    </ligand>
</feature>
<feature type="binding site" evidence="1">
    <location>
        <begin position="169"/>
        <end position="170"/>
    </location>
    <ligand>
        <name>S-adenosyl-L-methionine</name>
        <dbReference type="ChEBI" id="CHEBI:59789"/>
    </ligand>
</feature>
<feature type="binding site" evidence="1">
    <location>
        <position position="201"/>
    </location>
    <ligand>
        <name>S-adenosyl-L-methionine</name>
        <dbReference type="ChEBI" id="CHEBI:59789"/>
    </ligand>
</feature>
<feature type="binding site" evidence="1">
    <location>
        <begin position="223"/>
        <end position="225"/>
    </location>
    <ligand>
        <name>S-adenosyl-L-methionine</name>
        <dbReference type="ChEBI" id="CHEBI:59789"/>
    </ligand>
</feature>
<feature type="binding site" evidence="1">
    <location>
        <position position="301"/>
    </location>
    <ligand>
        <name>S-adenosyl-L-methionine</name>
        <dbReference type="ChEBI" id="CHEBI:59789"/>
    </ligand>
</feature>
<feature type="disulfide bond" description="(transient)" evidence="1">
    <location>
        <begin position="108"/>
        <end position="344"/>
    </location>
</feature>
<reference key="1">
    <citation type="journal article" date="2005" name="Genome Res.">
        <title>Coping with cold: the genome of the versatile marine Antarctica bacterium Pseudoalteromonas haloplanktis TAC125.</title>
        <authorList>
            <person name="Medigue C."/>
            <person name="Krin E."/>
            <person name="Pascal G."/>
            <person name="Barbe V."/>
            <person name="Bernsel A."/>
            <person name="Bertin P.N."/>
            <person name="Cheung F."/>
            <person name="Cruveiller S."/>
            <person name="D'Amico S."/>
            <person name="Duilio A."/>
            <person name="Fang G."/>
            <person name="Feller G."/>
            <person name="Ho C."/>
            <person name="Mangenot S."/>
            <person name="Marino G."/>
            <person name="Nilsson J."/>
            <person name="Parrilli E."/>
            <person name="Rocha E.P.C."/>
            <person name="Rouy Z."/>
            <person name="Sekowska A."/>
            <person name="Tutino M.L."/>
            <person name="Vallenet D."/>
            <person name="von Heijne G."/>
            <person name="Danchin A."/>
        </authorList>
    </citation>
    <scope>NUCLEOTIDE SEQUENCE [LARGE SCALE GENOMIC DNA]</scope>
    <source>
        <strain>TAC 125</strain>
    </source>
</reference>
<evidence type="ECO:0000255" key="1">
    <source>
        <dbReference type="HAMAP-Rule" id="MF_01849"/>
    </source>
</evidence>
<evidence type="ECO:0000255" key="2">
    <source>
        <dbReference type="PROSITE-ProRule" id="PRU01266"/>
    </source>
</evidence>
<gene>
    <name evidence="1" type="primary">rlmN</name>
    <name type="ordered locus">PSHAb0141</name>
</gene>
<name>RLMN_PSET1</name>